<comment type="function">
    <text evidence="1">The glycine cleavage system catalyzes the degradation of glycine. The H protein shuttles the methylamine group of glycine from the P protein to the T protein.</text>
</comment>
<comment type="function">
    <text evidence="1">Is also involved in protein lipoylation via its role as an octanoyl/lipoyl carrier protein intermediate.</text>
</comment>
<comment type="cofactor">
    <cofactor evidence="1">
        <name>(R)-lipoate</name>
        <dbReference type="ChEBI" id="CHEBI:83088"/>
    </cofactor>
    <text evidence="1">Binds 1 lipoyl cofactor covalently.</text>
</comment>
<comment type="subunit">
    <text evidence="1">The glycine cleavage system is composed of four proteins: P, T, L and H.</text>
</comment>
<comment type="similarity">
    <text evidence="1">Belongs to the GcvH family.</text>
</comment>
<evidence type="ECO:0000255" key="1">
    <source>
        <dbReference type="HAMAP-Rule" id="MF_00272"/>
    </source>
</evidence>
<evidence type="ECO:0000255" key="2">
    <source>
        <dbReference type="PROSITE-ProRule" id="PRU01066"/>
    </source>
</evidence>
<feature type="chain" id="PRO_0000166251" description="Glycine cleavage system H protein">
    <location>
        <begin position="1"/>
        <end position="126"/>
    </location>
</feature>
<feature type="domain" description="Lipoyl-binding" evidence="2">
    <location>
        <begin position="22"/>
        <end position="104"/>
    </location>
</feature>
<feature type="modified residue" description="N6-lipoyllysine" evidence="1">
    <location>
        <position position="63"/>
    </location>
</feature>
<sequence length="126" mass="14081">MAVPNELKYSKEHEWVKVEGNVATIGITEYAQSELGDIVFVELPETDDEINEGDTFGSVESVKTVSELYAPISGKVVEVNEELEDSPEFVNESPYEKAWMVKVEISDESQIEALLTAEKYSEMIGE</sequence>
<reference key="1">
    <citation type="journal article" date="2002" name="Lancet">
        <title>Genome and virulence determinants of high virulence community-acquired MRSA.</title>
        <authorList>
            <person name="Baba T."/>
            <person name="Takeuchi F."/>
            <person name="Kuroda M."/>
            <person name="Yuzawa H."/>
            <person name="Aoki K."/>
            <person name="Oguchi A."/>
            <person name="Nagai Y."/>
            <person name="Iwama N."/>
            <person name="Asano K."/>
            <person name="Naimi T."/>
            <person name="Kuroda H."/>
            <person name="Cui L."/>
            <person name="Yamamoto K."/>
            <person name="Hiramatsu K."/>
        </authorList>
    </citation>
    <scope>NUCLEOTIDE SEQUENCE [LARGE SCALE GENOMIC DNA]</scope>
    <source>
        <strain>MW2</strain>
    </source>
</reference>
<accession>Q8NXH7</accession>
<proteinExistence type="inferred from homology"/>
<protein>
    <recommendedName>
        <fullName evidence="1">Glycine cleavage system H protein</fullName>
    </recommendedName>
    <alternativeName>
        <fullName evidence="1">Octanoyl/lipoyl carrier protein</fullName>
    </alternativeName>
</protein>
<dbReference type="EMBL" id="BA000033">
    <property type="protein sequence ID" value="BAB94651.1"/>
    <property type="molecule type" value="Genomic_DNA"/>
</dbReference>
<dbReference type="RefSeq" id="WP_000290489.1">
    <property type="nucleotide sequence ID" value="NC_003923.1"/>
</dbReference>
<dbReference type="SMR" id="Q8NXH7"/>
<dbReference type="KEGG" id="sam:MW0786"/>
<dbReference type="HOGENOM" id="CLU_097408_2_0_9"/>
<dbReference type="GO" id="GO:0005829">
    <property type="term" value="C:cytosol"/>
    <property type="evidence" value="ECO:0007669"/>
    <property type="project" value="TreeGrafter"/>
</dbReference>
<dbReference type="GO" id="GO:0005960">
    <property type="term" value="C:glycine cleavage complex"/>
    <property type="evidence" value="ECO:0007669"/>
    <property type="project" value="InterPro"/>
</dbReference>
<dbReference type="GO" id="GO:0019464">
    <property type="term" value="P:glycine decarboxylation via glycine cleavage system"/>
    <property type="evidence" value="ECO:0007669"/>
    <property type="project" value="UniProtKB-UniRule"/>
</dbReference>
<dbReference type="CDD" id="cd06848">
    <property type="entry name" value="GCS_H"/>
    <property type="match status" value="1"/>
</dbReference>
<dbReference type="Gene3D" id="2.40.50.100">
    <property type="match status" value="1"/>
</dbReference>
<dbReference type="HAMAP" id="MF_00272">
    <property type="entry name" value="GcvH"/>
    <property type="match status" value="1"/>
</dbReference>
<dbReference type="InterPro" id="IPR003016">
    <property type="entry name" value="2-oxoA_DH_lipoyl-BS"/>
</dbReference>
<dbReference type="InterPro" id="IPR000089">
    <property type="entry name" value="Biotin_lipoyl"/>
</dbReference>
<dbReference type="InterPro" id="IPR002930">
    <property type="entry name" value="GCV_H"/>
</dbReference>
<dbReference type="InterPro" id="IPR033753">
    <property type="entry name" value="GCV_H/Fam206"/>
</dbReference>
<dbReference type="InterPro" id="IPR017453">
    <property type="entry name" value="GCV_H_sub"/>
</dbReference>
<dbReference type="InterPro" id="IPR011053">
    <property type="entry name" value="Single_hybrid_motif"/>
</dbReference>
<dbReference type="NCBIfam" id="TIGR00527">
    <property type="entry name" value="gcvH"/>
    <property type="match status" value="1"/>
</dbReference>
<dbReference type="NCBIfam" id="NF002270">
    <property type="entry name" value="PRK01202.1"/>
    <property type="match status" value="1"/>
</dbReference>
<dbReference type="PANTHER" id="PTHR11715">
    <property type="entry name" value="GLYCINE CLEAVAGE SYSTEM H PROTEIN"/>
    <property type="match status" value="1"/>
</dbReference>
<dbReference type="PANTHER" id="PTHR11715:SF3">
    <property type="entry name" value="GLYCINE CLEAVAGE SYSTEM H PROTEIN-RELATED"/>
    <property type="match status" value="1"/>
</dbReference>
<dbReference type="Pfam" id="PF01597">
    <property type="entry name" value="GCV_H"/>
    <property type="match status" value="1"/>
</dbReference>
<dbReference type="SUPFAM" id="SSF51230">
    <property type="entry name" value="Single hybrid motif"/>
    <property type="match status" value="1"/>
</dbReference>
<dbReference type="PROSITE" id="PS50968">
    <property type="entry name" value="BIOTINYL_LIPOYL"/>
    <property type="match status" value="1"/>
</dbReference>
<dbReference type="PROSITE" id="PS00189">
    <property type="entry name" value="LIPOYL"/>
    <property type="match status" value="1"/>
</dbReference>
<keyword id="KW-0450">Lipoyl</keyword>
<gene>
    <name evidence="1" type="primary">gcvH</name>
    <name type="ordered locus">MW0786</name>
</gene>
<organism>
    <name type="scientific">Staphylococcus aureus (strain MW2)</name>
    <dbReference type="NCBI Taxonomy" id="196620"/>
    <lineage>
        <taxon>Bacteria</taxon>
        <taxon>Bacillati</taxon>
        <taxon>Bacillota</taxon>
        <taxon>Bacilli</taxon>
        <taxon>Bacillales</taxon>
        <taxon>Staphylococcaceae</taxon>
        <taxon>Staphylococcus</taxon>
    </lineage>
</organism>
<name>GCSH_STAAW</name>